<protein>
    <recommendedName>
        <fullName evidence="1">Argininosuccinate synthase</fullName>
        <ecNumber evidence="1">6.3.4.5</ecNumber>
    </recommendedName>
    <alternativeName>
        <fullName evidence="1">Citrulline--aspartate ligase</fullName>
    </alternativeName>
</protein>
<reference key="1">
    <citation type="journal article" date="2008" name="Proc. Natl. Acad. Sci. U.S.A.">
        <title>Complete genome of the uncultured termite group 1 bacteria in a single host protist cell.</title>
        <authorList>
            <person name="Hongoh Y."/>
            <person name="Sharma V.K."/>
            <person name="Prakash T."/>
            <person name="Noda S."/>
            <person name="Taylor T.D."/>
            <person name="Kudo T."/>
            <person name="Sakaki Y."/>
            <person name="Toyoda A."/>
            <person name="Hattori M."/>
            <person name="Ohkuma M."/>
        </authorList>
    </citation>
    <scope>NUCLEOTIDE SEQUENCE [LARGE SCALE GENOMIC DNA]</scope>
</reference>
<sequence length="413" mass="46249">MAINKVSSKPVCRDGVKKVVVAYSGGLDTSIILSWVKENYGCEVVACCVDVGQGKELEGLDEKAKKTGASKSYIIDAKKEFVTNYIYPTIKVNALYENKYYLGTSLARPIIAEKIADVVKKEKADAVCHGATGKGNDQVRFELAFKSLMPNVKIIAPWREWDIKSREDAIDYAKKRDISVPVTKAKPYSSDANLWHISYEGGVLEDLENEYDESMFKMTVSPEKAPDKPMYLAIAFEQGIPVSIDGNKFTPVELITKLNEIAGANSIGRADIVENRLVGMKSRGVYESPAAAVLYAAHEELESISIDRDTLHFKQLLAHKYAEIAYYGLWFSPLREALDAFINETQKYVTGSIKLKLYKGNIIIVARQAKYSLYSEKLATFEKDEIYNHKDAEGFINLWGLPTKMQAMLRKSE</sequence>
<comment type="catalytic activity">
    <reaction evidence="1">
        <text>L-citrulline + L-aspartate + ATP = 2-(N(omega)-L-arginino)succinate + AMP + diphosphate + H(+)</text>
        <dbReference type="Rhea" id="RHEA:10932"/>
        <dbReference type="ChEBI" id="CHEBI:15378"/>
        <dbReference type="ChEBI" id="CHEBI:29991"/>
        <dbReference type="ChEBI" id="CHEBI:30616"/>
        <dbReference type="ChEBI" id="CHEBI:33019"/>
        <dbReference type="ChEBI" id="CHEBI:57472"/>
        <dbReference type="ChEBI" id="CHEBI:57743"/>
        <dbReference type="ChEBI" id="CHEBI:456215"/>
        <dbReference type="EC" id="6.3.4.5"/>
    </reaction>
</comment>
<comment type="pathway">
    <text evidence="1">Amino-acid biosynthesis; L-arginine biosynthesis; L-arginine from L-ornithine and carbamoyl phosphate: step 2/3.</text>
</comment>
<comment type="subunit">
    <text evidence="1">Homotetramer.</text>
</comment>
<comment type="subcellular location">
    <subcellularLocation>
        <location evidence="1">Cytoplasm</location>
    </subcellularLocation>
</comment>
<comment type="similarity">
    <text evidence="1">Belongs to the argininosuccinate synthase family. Type 1 subfamily.</text>
</comment>
<feature type="chain" id="PRO_1000116194" description="Argininosuccinate synthase">
    <location>
        <begin position="1"/>
        <end position="413"/>
    </location>
</feature>
<feature type="binding site" evidence="1">
    <location>
        <begin position="22"/>
        <end position="30"/>
    </location>
    <ligand>
        <name>ATP</name>
        <dbReference type="ChEBI" id="CHEBI:30616"/>
    </ligand>
</feature>
<feature type="binding site" evidence="1">
    <location>
        <position position="100"/>
    </location>
    <ligand>
        <name>L-citrulline</name>
        <dbReference type="ChEBI" id="CHEBI:57743"/>
    </ligand>
</feature>
<feature type="binding site" evidence="1">
    <location>
        <position position="105"/>
    </location>
    <ligand>
        <name>L-citrulline</name>
        <dbReference type="ChEBI" id="CHEBI:57743"/>
    </ligand>
</feature>
<feature type="binding site" evidence="1">
    <location>
        <position position="130"/>
    </location>
    <ligand>
        <name>ATP</name>
        <dbReference type="ChEBI" id="CHEBI:30616"/>
    </ligand>
</feature>
<feature type="binding site" evidence="1">
    <location>
        <position position="132"/>
    </location>
    <ligand>
        <name>L-aspartate</name>
        <dbReference type="ChEBI" id="CHEBI:29991"/>
    </ligand>
</feature>
<feature type="binding site" evidence="1">
    <location>
        <position position="136"/>
    </location>
    <ligand>
        <name>L-aspartate</name>
        <dbReference type="ChEBI" id="CHEBI:29991"/>
    </ligand>
</feature>
<feature type="binding site" evidence="1">
    <location>
        <position position="136"/>
    </location>
    <ligand>
        <name>L-citrulline</name>
        <dbReference type="ChEBI" id="CHEBI:57743"/>
    </ligand>
</feature>
<feature type="binding site" evidence="1">
    <location>
        <position position="137"/>
    </location>
    <ligand>
        <name>L-aspartate</name>
        <dbReference type="ChEBI" id="CHEBI:29991"/>
    </ligand>
</feature>
<feature type="binding site" evidence="1">
    <location>
        <position position="140"/>
    </location>
    <ligand>
        <name>L-citrulline</name>
        <dbReference type="ChEBI" id="CHEBI:57743"/>
    </ligand>
</feature>
<feature type="binding site" evidence="1">
    <location>
        <position position="189"/>
    </location>
    <ligand>
        <name>L-citrulline</name>
        <dbReference type="ChEBI" id="CHEBI:57743"/>
    </ligand>
</feature>
<feature type="binding site" evidence="1">
    <location>
        <position position="198"/>
    </location>
    <ligand>
        <name>L-citrulline</name>
        <dbReference type="ChEBI" id="CHEBI:57743"/>
    </ligand>
</feature>
<feature type="binding site" evidence="1">
    <location>
        <position position="274"/>
    </location>
    <ligand>
        <name>L-citrulline</name>
        <dbReference type="ChEBI" id="CHEBI:57743"/>
    </ligand>
</feature>
<feature type="binding site" evidence="1">
    <location>
        <position position="286"/>
    </location>
    <ligand>
        <name>L-citrulline</name>
        <dbReference type="ChEBI" id="CHEBI:57743"/>
    </ligand>
</feature>
<gene>
    <name evidence="1" type="primary">argG</name>
    <name type="ordered locus">TGRD_562</name>
</gene>
<accession>B1H0L3</accession>
<evidence type="ECO:0000255" key="1">
    <source>
        <dbReference type="HAMAP-Rule" id="MF_00005"/>
    </source>
</evidence>
<dbReference type="EC" id="6.3.4.5" evidence="1"/>
<dbReference type="EMBL" id="AP009510">
    <property type="protein sequence ID" value="BAG14045.1"/>
    <property type="molecule type" value="Genomic_DNA"/>
</dbReference>
<dbReference type="RefSeq" id="WP_015423570.1">
    <property type="nucleotide sequence ID" value="NC_020419.1"/>
</dbReference>
<dbReference type="SMR" id="B1H0L3"/>
<dbReference type="STRING" id="471821.TGRD_562"/>
<dbReference type="KEGG" id="rsd:TGRD_562"/>
<dbReference type="PATRIC" id="fig|471821.5.peg.908"/>
<dbReference type="HOGENOM" id="CLU_032784_4_2_0"/>
<dbReference type="UniPathway" id="UPA00068">
    <property type="reaction ID" value="UER00113"/>
</dbReference>
<dbReference type="Proteomes" id="UP000001691">
    <property type="component" value="Chromosome"/>
</dbReference>
<dbReference type="GO" id="GO:0005737">
    <property type="term" value="C:cytoplasm"/>
    <property type="evidence" value="ECO:0007669"/>
    <property type="project" value="UniProtKB-SubCell"/>
</dbReference>
<dbReference type="GO" id="GO:0004055">
    <property type="term" value="F:argininosuccinate synthase activity"/>
    <property type="evidence" value="ECO:0007669"/>
    <property type="project" value="UniProtKB-UniRule"/>
</dbReference>
<dbReference type="GO" id="GO:0005524">
    <property type="term" value="F:ATP binding"/>
    <property type="evidence" value="ECO:0007669"/>
    <property type="project" value="UniProtKB-UniRule"/>
</dbReference>
<dbReference type="GO" id="GO:0000053">
    <property type="term" value="P:argininosuccinate metabolic process"/>
    <property type="evidence" value="ECO:0007669"/>
    <property type="project" value="TreeGrafter"/>
</dbReference>
<dbReference type="GO" id="GO:0006526">
    <property type="term" value="P:L-arginine biosynthetic process"/>
    <property type="evidence" value="ECO:0007669"/>
    <property type="project" value="UniProtKB-UniRule"/>
</dbReference>
<dbReference type="GO" id="GO:0000050">
    <property type="term" value="P:urea cycle"/>
    <property type="evidence" value="ECO:0007669"/>
    <property type="project" value="TreeGrafter"/>
</dbReference>
<dbReference type="CDD" id="cd01999">
    <property type="entry name" value="ASS"/>
    <property type="match status" value="1"/>
</dbReference>
<dbReference type="FunFam" id="3.40.50.620:FF:000019">
    <property type="entry name" value="Argininosuccinate synthase"/>
    <property type="match status" value="1"/>
</dbReference>
<dbReference type="FunFam" id="3.90.1260.10:FF:000007">
    <property type="entry name" value="Argininosuccinate synthase"/>
    <property type="match status" value="1"/>
</dbReference>
<dbReference type="Gene3D" id="3.90.1260.10">
    <property type="entry name" value="Argininosuccinate synthetase, chain A, domain 2"/>
    <property type="match status" value="1"/>
</dbReference>
<dbReference type="Gene3D" id="3.40.50.620">
    <property type="entry name" value="HUPs"/>
    <property type="match status" value="1"/>
</dbReference>
<dbReference type="Gene3D" id="1.20.5.470">
    <property type="entry name" value="Single helix bin"/>
    <property type="match status" value="1"/>
</dbReference>
<dbReference type="HAMAP" id="MF_00005">
    <property type="entry name" value="Arg_succ_synth_type1"/>
    <property type="match status" value="1"/>
</dbReference>
<dbReference type="InterPro" id="IPR048268">
    <property type="entry name" value="Arginosuc_syn_C"/>
</dbReference>
<dbReference type="InterPro" id="IPR048267">
    <property type="entry name" value="Arginosuc_syn_N"/>
</dbReference>
<dbReference type="InterPro" id="IPR001518">
    <property type="entry name" value="Arginosuc_synth"/>
</dbReference>
<dbReference type="InterPro" id="IPR018223">
    <property type="entry name" value="Arginosuc_synth_CS"/>
</dbReference>
<dbReference type="InterPro" id="IPR023434">
    <property type="entry name" value="Arginosuc_synth_type_1_subfam"/>
</dbReference>
<dbReference type="InterPro" id="IPR024074">
    <property type="entry name" value="AS_cat/multimer_dom_body"/>
</dbReference>
<dbReference type="InterPro" id="IPR014729">
    <property type="entry name" value="Rossmann-like_a/b/a_fold"/>
</dbReference>
<dbReference type="NCBIfam" id="TIGR00032">
    <property type="entry name" value="argG"/>
    <property type="match status" value="1"/>
</dbReference>
<dbReference type="NCBIfam" id="NF001770">
    <property type="entry name" value="PRK00509.1"/>
    <property type="match status" value="1"/>
</dbReference>
<dbReference type="PANTHER" id="PTHR11587">
    <property type="entry name" value="ARGININOSUCCINATE SYNTHASE"/>
    <property type="match status" value="1"/>
</dbReference>
<dbReference type="PANTHER" id="PTHR11587:SF2">
    <property type="entry name" value="ARGININOSUCCINATE SYNTHASE"/>
    <property type="match status" value="1"/>
</dbReference>
<dbReference type="Pfam" id="PF20979">
    <property type="entry name" value="Arginosuc_syn_C"/>
    <property type="match status" value="1"/>
</dbReference>
<dbReference type="Pfam" id="PF00764">
    <property type="entry name" value="Arginosuc_synth"/>
    <property type="match status" value="1"/>
</dbReference>
<dbReference type="SUPFAM" id="SSF52402">
    <property type="entry name" value="Adenine nucleotide alpha hydrolases-like"/>
    <property type="match status" value="1"/>
</dbReference>
<dbReference type="SUPFAM" id="SSF69864">
    <property type="entry name" value="Argininosuccinate synthetase, C-terminal domain"/>
    <property type="match status" value="1"/>
</dbReference>
<dbReference type="PROSITE" id="PS00564">
    <property type="entry name" value="ARGININOSUCCIN_SYN_1"/>
    <property type="match status" value="1"/>
</dbReference>
<dbReference type="PROSITE" id="PS00565">
    <property type="entry name" value="ARGININOSUCCIN_SYN_2"/>
    <property type="match status" value="1"/>
</dbReference>
<name>ASSY_ENDTX</name>
<proteinExistence type="inferred from homology"/>
<organism>
    <name type="scientific">Endomicrobium trichonymphae</name>
    <dbReference type="NCBI Taxonomy" id="1408204"/>
    <lineage>
        <taxon>Bacteria</taxon>
        <taxon>Pseudomonadati</taxon>
        <taxon>Elusimicrobiota</taxon>
        <taxon>Endomicrobiia</taxon>
        <taxon>Endomicrobiales</taxon>
        <taxon>Endomicrobiaceae</taxon>
        <taxon>Candidatus Endomicrobiellum</taxon>
    </lineage>
</organism>
<keyword id="KW-0028">Amino-acid biosynthesis</keyword>
<keyword id="KW-0055">Arginine biosynthesis</keyword>
<keyword id="KW-0067">ATP-binding</keyword>
<keyword id="KW-0963">Cytoplasm</keyword>
<keyword id="KW-0436">Ligase</keyword>
<keyword id="KW-0547">Nucleotide-binding</keyword>